<organism>
    <name type="scientific">Pyrococcus horikoshii (strain ATCC 700860 / DSM 12428 / JCM 9974 / NBRC 100139 / OT-3)</name>
    <dbReference type="NCBI Taxonomy" id="70601"/>
    <lineage>
        <taxon>Archaea</taxon>
        <taxon>Methanobacteriati</taxon>
        <taxon>Methanobacteriota</taxon>
        <taxon>Thermococci</taxon>
        <taxon>Thermococcales</taxon>
        <taxon>Thermococcaceae</taxon>
        <taxon>Pyrococcus</taxon>
    </lineage>
</organism>
<keyword id="KW-0963">Cytoplasm</keyword>
<keyword id="KW-0285">Flavoprotein</keyword>
<keyword id="KW-0288">FMN</keyword>
<keyword id="KW-0413">Isomerase</keyword>
<keyword id="KW-0414">Isoprene biosynthesis</keyword>
<keyword id="KW-0460">Magnesium</keyword>
<keyword id="KW-0479">Metal-binding</keyword>
<keyword id="KW-0521">NADP</keyword>
<accession>O58893</accession>
<gene>
    <name evidence="1" type="primary">fni</name>
    <name type="ordered locus">PH1202</name>
</gene>
<name>IDI2_PYRHO</name>
<evidence type="ECO:0000255" key="1">
    <source>
        <dbReference type="HAMAP-Rule" id="MF_00354"/>
    </source>
</evidence>
<feature type="chain" id="PRO_0000134452" description="Isopentenyl-diphosphate delta-isomerase">
    <location>
        <begin position="1"/>
        <end position="371"/>
    </location>
</feature>
<feature type="binding site" evidence="1">
    <location>
        <begin position="9"/>
        <end position="10"/>
    </location>
    <ligand>
        <name>substrate</name>
    </ligand>
</feature>
<feature type="binding site" evidence="1">
    <location>
        <position position="66"/>
    </location>
    <ligand>
        <name>FMN</name>
        <dbReference type="ChEBI" id="CHEBI:58210"/>
    </ligand>
</feature>
<feature type="binding site" evidence="1">
    <location>
        <begin position="67"/>
        <end position="69"/>
    </location>
    <ligand>
        <name>FMN</name>
        <dbReference type="ChEBI" id="CHEBI:58210"/>
    </ligand>
</feature>
<feature type="binding site" evidence="1">
    <location>
        <begin position="100"/>
        <end position="102"/>
    </location>
    <ligand>
        <name>substrate</name>
    </ligand>
</feature>
<feature type="binding site" evidence="1">
    <location>
        <position position="100"/>
    </location>
    <ligand>
        <name>FMN</name>
        <dbReference type="ChEBI" id="CHEBI:58210"/>
    </ligand>
</feature>
<feature type="binding site" evidence="1">
    <location>
        <position position="128"/>
    </location>
    <ligand>
        <name>FMN</name>
        <dbReference type="ChEBI" id="CHEBI:58210"/>
    </ligand>
</feature>
<feature type="binding site" evidence="1">
    <location>
        <position position="167"/>
    </location>
    <ligand>
        <name>substrate</name>
    </ligand>
</feature>
<feature type="binding site" evidence="1">
    <location>
        <position position="168"/>
    </location>
    <ligand>
        <name>Mg(2+)</name>
        <dbReference type="ChEBI" id="CHEBI:18420"/>
    </ligand>
</feature>
<feature type="binding site" evidence="1">
    <location>
        <position position="199"/>
    </location>
    <ligand>
        <name>FMN</name>
        <dbReference type="ChEBI" id="CHEBI:58210"/>
    </ligand>
</feature>
<feature type="binding site" evidence="1">
    <location>
        <position position="224"/>
    </location>
    <ligand>
        <name>FMN</name>
        <dbReference type="ChEBI" id="CHEBI:58210"/>
    </ligand>
</feature>
<feature type="binding site" evidence="1">
    <location>
        <position position="229"/>
    </location>
    <ligand>
        <name>FMN</name>
        <dbReference type="ChEBI" id="CHEBI:58210"/>
    </ligand>
</feature>
<feature type="binding site" evidence="1">
    <location>
        <begin position="278"/>
        <end position="280"/>
    </location>
    <ligand>
        <name>FMN</name>
        <dbReference type="ChEBI" id="CHEBI:58210"/>
    </ligand>
</feature>
<feature type="binding site" evidence="1">
    <location>
        <begin position="299"/>
        <end position="300"/>
    </location>
    <ligand>
        <name>FMN</name>
        <dbReference type="ChEBI" id="CHEBI:58210"/>
    </ligand>
</feature>
<comment type="function">
    <text evidence="1">Involved in the biosynthesis of isoprenoids. Catalyzes the 1,3-allylic rearrangement of the homoallylic substrate isopentenyl (IPP) to its allylic isomer, dimethylallyl diphosphate (DMAPP).</text>
</comment>
<comment type="catalytic activity">
    <reaction evidence="1">
        <text>isopentenyl diphosphate = dimethylallyl diphosphate</text>
        <dbReference type="Rhea" id="RHEA:23284"/>
        <dbReference type="ChEBI" id="CHEBI:57623"/>
        <dbReference type="ChEBI" id="CHEBI:128769"/>
        <dbReference type="EC" id="5.3.3.2"/>
    </reaction>
</comment>
<comment type="cofactor">
    <cofactor evidence="1">
        <name>FMN</name>
        <dbReference type="ChEBI" id="CHEBI:58210"/>
    </cofactor>
</comment>
<comment type="cofactor">
    <cofactor evidence="1">
        <name>NADPH</name>
        <dbReference type="ChEBI" id="CHEBI:57783"/>
    </cofactor>
</comment>
<comment type="cofactor">
    <cofactor evidence="1">
        <name>Mg(2+)</name>
        <dbReference type="ChEBI" id="CHEBI:18420"/>
    </cofactor>
</comment>
<comment type="subunit">
    <text evidence="1">Homooctamer. Dimer of tetramers.</text>
</comment>
<comment type="subcellular location">
    <subcellularLocation>
        <location evidence="1">Cytoplasm</location>
    </subcellularLocation>
</comment>
<comment type="similarity">
    <text evidence="1">Belongs to the IPP isomerase type 2 family.</text>
</comment>
<reference key="1">
    <citation type="journal article" date="1998" name="DNA Res.">
        <title>Complete sequence and gene organization of the genome of a hyper-thermophilic archaebacterium, Pyrococcus horikoshii OT3.</title>
        <authorList>
            <person name="Kawarabayasi Y."/>
            <person name="Sawada M."/>
            <person name="Horikawa H."/>
            <person name="Haikawa Y."/>
            <person name="Hino Y."/>
            <person name="Yamamoto S."/>
            <person name="Sekine M."/>
            <person name="Baba S."/>
            <person name="Kosugi H."/>
            <person name="Hosoyama A."/>
            <person name="Nagai Y."/>
            <person name="Sakai M."/>
            <person name="Ogura K."/>
            <person name="Otsuka R."/>
            <person name="Nakazawa H."/>
            <person name="Takamiya M."/>
            <person name="Ohfuku Y."/>
            <person name="Funahashi T."/>
            <person name="Tanaka T."/>
            <person name="Kudoh Y."/>
            <person name="Yamazaki J."/>
            <person name="Kushida N."/>
            <person name="Oguchi A."/>
            <person name="Aoki K."/>
            <person name="Yoshizawa T."/>
            <person name="Nakamura Y."/>
            <person name="Robb F.T."/>
            <person name="Horikoshi K."/>
            <person name="Masuchi Y."/>
            <person name="Shizuya H."/>
            <person name="Kikuchi H."/>
        </authorList>
    </citation>
    <scope>NUCLEOTIDE SEQUENCE [LARGE SCALE GENOMIC DNA]</scope>
    <source>
        <strain>ATCC 700860 / DSM 12428 / JCM 9974 / NBRC 100139 / OT-3</strain>
    </source>
</reference>
<dbReference type="EC" id="5.3.3.2" evidence="1"/>
<dbReference type="EMBL" id="BA000001">
    <property type="protein sequence ID" value="BAA30302.1"/>
    <property type="molecule type" value="Genomic_DNA"/>
</dbReference>
<dbReference type="PIR" id="D71063">
    <property type="entry name" value="D71063"/>
</dbReference>
<dbReference type="RefSeq" id="WP_010885288.1">
    <property type="nucleotide sequence ID" value="NC_000961.1"/>
</dbReference>
<dbReference type="SMR" id="O58893"/>
<dbReference type="STRING" id="70601.gene:9378164"/>
<dbReference type="EnsemblBacteria" id="BAA30302">
    <property type="protein sequence ID" value="BAA30302"/>
    <property type="gene ID" value="BAA30302"/>
</dbReference>
<dbReference type="GeneID" id="1443523"/>
<dbReference type="KEGG" id="pho:PH1202"/>
<dbReference type="eggNOG" id="arCOG00613">
    <property type="taxonomic scope" value="Archaea"/>
</dbReference>
<dbReference type="OrthoDB" id="371955at2157"/>
<dbReference type="Proteomes" id="UP000000752">
    <property type="component" value="Chromosome"/>
</dbReference>
<dbReference type="GO" id="GO:0005737">
    <property type="term" value="C:cytoplasm"/>
    <property type="evidence" value="ECO:0007669"/>
    <property type="project" value="UniProtKB-SubCell"/>
</dbReference>
<dbReference type="GO" id="GO:0010181">
    <property type="term" value="F:FMN binding"/>
    <property type="evidence" value="ECO:0007669"/>
    <property type="project" value="UniProtKB-UniRule"/>
</dbReference>
<dbReference type="GO" id="GO:0004452">
    <property type="term" value="F:isopentenyl-diphosphate delta-isomerase activity"/>
    <property type="evidence" value="ECO:0007669"/>
    <property type="project" value="UniProtKB-UniRule"/>
</dbReference>
<dbReference type="GO" id="GO:0000287">
    <property type="term" value="F:magnesium ion binding"/>
    <property type="evidence" value="ECO:0007669"/>
    <property type="project" value="UniProtKB-UniRule"/>
</dbReference>
<dbReference type="GO" id="GO:0070402">
    <property type="term" value="F:NADPH binding"/>
    <property type="evidence" value="ECO:0007669"/>
    <property type="project" value="UniProtKB-UniRule"/>
</dbReference>
<dbReference type="GO" id="GO:0016491">
    <property type="term" value="F:oxidoreductase activity"/>
    <property type="evidence" value="ECO:0007669"/>
    <property type="project" value="InterPro"/>
</dbReference>
<dbReference type="GO" id="GO:0008299">
    <property type="term" value="P:isoprenoid biosynthetic process"/>
    <property type="evidence" value="ECO:0007669"/>
    <property type="project" value="UniProtKB-UniRule"/>
</dbReference>
<dbReference type="CDD" id="cd02811">
    <property type="entry name" value="IDI-2_FMN"/>
    <property type="match status" value="1"/>
</dbReference>
<dbReference type="Gene3D" id="3.20.20.70">
    <property type="entry name" value="Aldolase class I"/>
    <property type="match status" value="1"/>
</dbReference>
<dbReference type="HAMAP" id="MF_00354">
    <property type="entry name" value="Idi_2"/>
    <property type="match status" value="1"/>
</dbReference>
<dbReference type="InterPro" id="IPR013785">
    <property type="entry name" value="Aldolase_TIM"/>
</dbReference>
<dbReference type="InterPro" id="IPR000262">
    <property type="entry name" value="FMN-dep_DH"/>
</dbReference>
<dbReference type="InterPro" id="IPR011179">
    <property type="entry name" value="IPdP_isomerase"/>
</dbReference>
<dbReference type="NCBIfam" id="TIGR02151">
    <property type="entry name" value="IPP_isom_2"/>
    <property type="match status" value="1"/>
</dbReference>
<dbReference type="PANTHER" id="PTHR43665">
    <property type="entry name" value="ISOPENTENYL-DIPHOSPHATE DELTA-ISOMERASE"/>
    <property type="match status" value="1"/>
</dbReference>
<dbReference type="PANTHER" id="PTHR43665:SF1">
    <property type="entry name" value="ISOPENTENYL-DIPHOSPHATE DELTA-ISOMERASE"/>
    <property type="match status" value="1"/>
</dbReference>
<dbReference type="Pfam" id="PF01070">
    <property type="entry name" value="FMN_dh"/>
    <property type="match status" value="1"/>
</dbReference>
<dbReference type="PIRSF" id="PIRSF003314">
    <property type="entry name" value="IPP_isomerase"/>
    <property type="match status" value="1"/>
</dbReference>
<dbReference type="SMART" id="SM01240">
    <property type="entry name" value="IMPDH"/>
    <property type="match status" value="1"/>
</dbReference>
<dbReference type="SUPFAM" id="SSF51395">
    <property type="entry name" value="FMN-linked oxidoreductases"/>
    <property type="match status" value="1"/>
</dbReference>
<sequence length="371" mass="41413">MKEELTILRKFEHIEHCLKRNVEAHVSNGFEDVYFVHKSLPEIDKDEIDLTVEFLGRKFDYPIMITGMTGGTRREEIAGKINRTLAMAAEELNIPFGVGSQRAMIEKPETWESYYVRDVAPDIFLIGNLGAPQFGKNAKKRYSVKEVLYAIEKIEADAIAIHMNPLQESVQPEGDTTYAGVLEALAEIKSSINYPVIAKETGAGVSKEVAIELESVGIDAIDISGLGGTSWSAVEYYRAKDSEKRKIALKFWDWGIKTAISLAEVRWATNLPIIASGGMRDGVMMAKALAMGASLVGIALPVLRPAARGDVEGVVRIIRGYAEEIKNVMFLVGARNIRELRRVPLVITGFVREWLLQRIDLNSYLRSRFKH</sequence>
<proteinExistence type="inferred from homology"/>
<protein>
    <recommendedName>
        <fullName evidence="1">Isopentenyl-diphosphate delta-isomerase</fullName>
        <shortName evidence="1">IPP isomerase</shortName>
        <ecNumber evidence="1">5.3.3.2</ecNumber>
    </recommendedName>
    <alternativeName>
        <fullName evidence="1">Isopentenyl diphosphate:dimethylallyl diphosphate isomerase</fullName>
    </alternativeName>
    <alternativeName>
        <fullName evidence="1">Isopentenyl pyrophosphate isomerase</fullName>
    </alternativeName>
    <alternativeName>
        <fullName evidence="1">Type 2 isopentenyl diphosphate isomerase</fullName>
        <shortName evidence="1">IDI-2</shortName>
    </alternativeName>
</protein>